<sequence>MNSVSAAERLKSFGDAGPVCNKSIIFPSRVVTLANSFEKKDRSWYVKSQIPTDLSIQVNDITFKAHKFPLISKCGYISSIELKPSTSENGYHLKLENFPGGADTFETILKFCYNLPLDLNPLNVAPLRCASEYLYMTEEFEAGNLISKTEAFITFVVLASWRDTLTVLRSCTNLSPWAENLQIVRRCCDLLAWKACNDNNIPEDVVDRNERCLYNDIATLDIDHFMRVITTMKARRAKPQITGKIIMKYADNFLPVINDDLEGIKGYGLGKNELQFSVNRGRMEESNSLGCQEHKETIESLVSVLPPQSGAVSCHFLLRMLKTSIVYSASPALISDLEKRVGMALEDANVCDLLIPNFKNEEQQERVRIFEFFLMHEQQQVLGKPSISKLLDNYLAEIAKDPYLPITKFQVLAEMLPENAWKCHDGLYRAIDMFLKTHPSLSDHDRRRLCKTMNCEKLSLDACLHAAQNDRLPLRTIVQINTQVLFSEQVKMRMMMQDKLPEKEEENSGGREDKRMSRDNEIIKTLKEELENVKKKMSELQSDYNELQQEYERLSSKQKSSHNWGLRWQKVKKSFQTKREDEETRERTRRRSSTGQRTSFRRRMSMS</sequence>
<reference key="1">
    <citation type="journal article" date="2000" name="Nature">
        <title>Sequence and analysis of chromosome 5 of the plant Arabidopsis thaliana.</title>
        <authorList>
            <person name="Tabata S."/>
            <person name="Kaneko T."/>
            <person name="Nakamura Y."/>
            <person name="Kotani H."/>
            <person name="Kato T."/>
            <person name="Asamizu E."/>
            <person name="Miyajima N."/>
            <person name="Sasamoto S."/>
            <person name="Kimura T."/>
            <person name="Hosouchi T."/>
            <person name="Kawashima K."/>
            <person name="Kohara M."/>
            <person name="Matsumoto M."/>
            <person name="Matsuno A."/>
            <person name="Muraki A."/>
            <person name="Nakayama S."/>
            <person name="Nakazaki N."/>
            <person name="Naruo K."/>
            <person name="Okumura S."/>
            <person name="Shinpo S."/>
            <person name="Takeuchi C."/>
            <person name="Wada T."/>
            <person name="Watanabe A."/>
            <person name="Yamada M."/>
            <person name="Yasuda M."/>
            <person name="Sato S."/>
            <person name="de la Bastide M."/>
            <person name="Huang E."/>
            <person name="Spiegel L."/>
            <person name="Gnoj L."/>
            <person name="O'Shaughnessy A."/>
            <person name="Preston R."/>
            <person name="Habermann K."/>
            <person name="Murray J."/>
            <person name="Johnson D."/>
            <person name="Rohlfing T."/>
            <person name="Nelson J."/>
            <person name="Stoneking T."/>
            <person name="Pepin K."/>
            <person name="Spieth J."/>
            <person name="Sekhon M."/>
            <person name="Armstrong J."/>
            <person name="Becker M."/>
            <person name="Belter E."/>
            <person name="Cordum H."/>
            <person name="Cordes M."/>
            <person name="Courtney L."/>
            <person name="Courtney W."/>
            <person name="Dante M."/>
            <person name="Du H."/>
            <person name="Edwards J."/>
            <person name="Fryman J."/>
            <person name="Haakensen B."/>
            <person name="Lamar E."/>
            <person name="Latreille P."/>
            <person name="Leonard S."/>
            <person name="Meyer R."/>
            <person name="Mulvaney E."/>
            <person name="Ozersky P."/>
            <person name="Riley A."/>
            <person name="Strowmatt C."/>
            <person name="Wagner-McPherson C."/>
            <person name="Wollam A."/>
            <person name="Yoakum M."/>
            <person name="Bell M."/>
            <person name="Dedhia N."/>
            <person name="Parnell L."/>
            <person name="Shah R."/>
            <person name="Rodriguez M."/>
            <person name="Hoon See L."/>
            <person name="Vil D."/>
            <person name="Baker J."/>
            <person name="Kirchoff K."/>
            <person name="Toth K."/>
            <person name="King L."/>
            <person name="Bahret A."/>
            <person name="Miller B."/>
            <person name="Marra M.A."/>
            <person name="Martienssen R."/>
            <person name="McCombie W.R."/>
            <person name="Wilson R.K."/>
            <person name="Murphy G."/>
            <person name="Bancroft I."/>
            <person name="Volckaert G."/>
            <person name="Wambutt R."/>
            <person name="Duesterhoeft A."/>
            <person name="Stiekema W."/>
            <person name="Pohl T."/>
            <person name="Entian K.-D."/>
            <person name="Terryn N."/>
            <person name="Hartley N."/>
            <person name="Bent E."/>
            <person name="Johnson S."/>
            <person name="Langham S.-A."/>
            <person name="McCullagh B."/>
            <person name="Robben J."/>
            <person name="Grymonprez B."/>
            <person name="Zimmermann W."/>
            <person name="Ramsperger U."/>
            <person name="Wedler H."/>
            <person name="Balke K."/>
            <person name="Wedler E."/>
            <person name="Peters S."/>
            <person name="van Staveren M."/>
            <person name="Dirkse W."/>
            <person name="Mooijman P."/>
            <person name="Klein Lankhorst R."/>
            <person name="Weitzenegger T."/>
            <person name="Bothe G."/>
            <person name="Rose M."/>
            <person name="Hauf J."/>
            <person name="Berneiser S."/>
            <person name="Hempel S."/>
            <person name="Feldpausch M."/>
            <person name="Lamberth S."/>
            <person name="Villarroel R."/>
            <person name="Gielen J."/>
            <person name="Ardiles W."/>
            <person name="Bents O."/>
            <person name="Lemcke K."/>
            <person name="Kolesov G."/>
            <person name="Mayer K.F.X."/>
            <person name="Rudd S."/>
            <person name="Schoof H."/>
            <person name="Schueller C."/>
            <person name="Zaccaria P."/>
            <person name="Mewes H.-W."/>
            <person name="Bevan M."/>
            <person name="Fransz P.F."/>
        </authorList>
    </citation>
    <scope>NUCLEOTIDE SEQUENCE [LARGE SCALE GENOMIC DNA]</scope>
    <source>
        <strain>cv. Columbia</strain>
    </source>
</reference>
<reference key="2">
    <citation type="journal article" date="2017" name="Plant J.">
        <title>Araport11: a complete reannotation of the Arabidopsis thaliana reference genome.</title>
        <authorList>
            <person name="Cheng C.Y."/>
            <person name="Krishnakumar V."/>
            <person name="Chan A.P."/>
            <person name="Thibaud-Nissen F."/>
            <person name="Schobel S."/>
            <person name="Town C.D."/>
        </authorList>
    </citation>
    <scope>GENOME REANNOTATION</scope>
    <source>
        <strain>cv. Columbia</strain>
    </source>
</reference>
<reference key="3">
    <citation type="journal article" date="2005" name="J. Biol. Chem.">
        <title>Cullins 3a and 3b assemble with members of the broad complex/tramtrack/bric-a-brac (BTB) protein family to form essential ubiquitin-protein ligases (E3s) in Arabidopsis.</title>
        <authorList>
            <person name="Gingerich D.J."/>
            <person name="Gagne J.M."/>
            <person name="Salter D.W."/>
            <person name="Hellmann H."/>
            <person name="Estelle M."/>
            <person name="Ma L."/>
            <person name="Vierstra R.D."/>
        </authorList>
    </citation>
    <scope>DOMAIN BTB</scope>
</reference>
<reference key="4">
    <citation type="journal article" date="2008" name="Plant J.">
        <title>Vein patterning screens and the defectively organized tributaries mutants in Arabidopsis thaliana.</title>
        <authorList>
            <person name="Petricka J.J."/>
            <person name="Clay N.K."/>
            <person name="Nelson T.M."/>
        </authorList>
    </citation>
    <scope>FUNCTION</scope>
    <scope>TISSUE SPECIFICITY</scope>
    <scope>DISRUPTION PHENOTYPE</scope>
</reference>
<gene>
    <name evidence="9" type="primary">DOT3</name>
    <name type="ordered locus">At5g10250</name>
    <name type="ORF">F18D22.20</name>
</gene>
<comment type="function">
    <text evidence="1 8">May act as a substrate-specific adapter of an E3 ubiquitin-protein ligase complex (CUL3-RBX1-BTB) which mediates the ubiquitination and subsequent proteasomal degradation of target proteins (By similarity). Involved in leaf vasculature patterning (PubMed:18643975).</text>
</comment>
<comment type="pathway">
    <text>Protein modification; protein ubiquitination.</text>
</comment>
<comment type="tissue specificity">
    <text evidence="8">Expressed in emerging leaf primordia.</text>
</comment>
<comment type="domain">
    <text evidence="7">The BTB/POZ domain mediates the interaction with some component of ubiquitin ligase complexes.</text>
</comment>
<comment type="disruption phenotype">
    <text evidence="8">Defects in shoot and primary root growth and aberrant parallel venation pattern in juvenile leaves.</text>
</comment>
<comment type="similarity">
    <text evidence="5">Belongs to the NPH3 family.</text>
</comment>
<accession>Q9LFU0</accession>
<proteinExistence type="evidence at transcript level"/>
<dbReference type="EMBL" id="AL360334">
    <property type="protein sequence ID" value="CAB96681.1"/>
    <property type="molecule type" value="Genomic_DNA"/>
</dbReference>
<dbReference type="EMBL" id="CP002688">
    <property type="protein sequence ID" value="AED91513.1"/>
    <property type="molecule type" value="Genomic_DNA"/>
</dbReference>
<dbReference type="PIR" id="T50813">
    <property type="entry name" value="T50813"/>
</dbReference>
<dbReference type="RefSeq" id="NP_196587.1">
    <property type="nucleotide sequence ID" value="NM_121063.2"/>
</dbReference>
<dbReference type="SMR" id="Q9LFU0"/>
<dbReference type="FunCoup" id="Q9LFU0">
    <property type="interactions" value="2"/>
</dbReference>
<dbReference type="STRING" id="3702.Q9LFU0"/>
<dbReference type="PaxDb" id="3702-AT5G10250.1"/>
<dbReference type="EnsemblPlants" id="AT5G10250.1">
    <property type="protein sequence ID" value="AT5G10250.1"/>
    <property type="gene ID" value="AT5G10250"/>
</dbReference>
<dbReference type="GeneID" id="830889"/>
<dbReference type="Gramene" id="AT5G10250.1">
    <property type="protein sequence ID" value="AT5G10250.1"/>
    <property type="gene ID" value="AT5G10250"/>
</dbReference>
<dbReference type="KEGG" id="ath:AT5G10250"/>
<dbReference type="Araport" id="AT5G10250"/>
<dbReference type="TAIR" id="AT5G10250">
    <property type="gene designation" value="DOT3"/>
</dbReference>
<dbReference type="eggNOG" id="ENOG502QR2D">
    <property type="taxonomic scope" value="Eukaryota"/>
</dbReference>
<dbReference type="HOGENOM" id="CLU_005994_6_1_1"/>
<dbReference type="InParanoid" id="Q9LFU0"/>
<dbReference type="PhylomeDB" id="Q9LFU0"/>
<dbReference type="UniPathway" id="UPA00143"/>
<dbReference type="PRO" id="PR:Q9LFU0"/>
<dbReference type="Proteomes" id="UP000006548">
    <property type="component" value="Chromosome 5"/>
</dbReference>
<dbReference type="ExpressionAtlas" id="Q9LFU0">
    <property type="expression patterns" value="baseline and differential"/>
</dbReference>
<dbReference type="GO" id="GO:0010588">
    <property type="term" value="P:cotyledon vascular tissue pattern formation"/>
    <property type="evidence" value="ECO:0000315"/>
    <property type="project" value="TAIR"/>
</dbReference>
<dbReference type="GO" id="GO:0010305">
    <property type="term" value="P:leaf vascular tissue pattern formation"/>
    <property type="evidence" value="ECO:0000315"/>
    <property type="project" value="TAIR"/>
</dbReference>
<dbReference type="GO" id="GO:0010087">
    <property type="term" value="P:phloem or xylem histogenesis"/>
    <property type="evidence" value="ECO:0000315"/>
    <property type="project" value="TAIR"/>
</dbReference>
<dbReference type="GO" id="GO:0080022">
    <property type="term" value="P:primary root development"/>
    <property type="evidence" value="ECO:0000315"/>
    <property type="project" value="TAIR"/>
</dbReference>
<dbReference type="GO" id="GO:0016567">
    <property type="term" value="P:protein ubiquitination"/>
    <property type="evidence" value="ECO:0007669"/>
    <property type="project" value="UniProtKB-UniPathway"/>
</dbReference>
<dbReference type="GO" id="GO:0048367">
    <property type="term" value="P:shoot system development"/>
    <property type="evidence" value="ECO:0000315"/>
    <property type="project" value="TAIR"/>
</dbReference>
<dbReference type="Gene3D" id="3.30.710.10">
    <property type="entry name" value="Potassium Channel Kv1.1, Chain A"/>
    <property type="match status" value="1"/>
</dbReference>
<dbReference type="InterPro" id="IPR000210">
    <property type="entry name" value="BTB/POZ_dom"/>
</dbReference>
<dbReference type="InterPro" id="IPR043454">
    <property type="entry name" value="NPH3/RPT2-like"/>
</dbReference>
<dbReference type="InterPro" id="IPR027356">
    <property type="entry name" value="NPH3_dom"/>
</dbReference>
<dbReference type="InterPro" id="IPR011333">
    <property type="entry name" value="SKP1/BTB/POZ_sf"/>
</dbReference>
<dbReference type="PANTHER" id="PTHR32370">
    <property type="entry name" value="OS12G0117600 PROTEIN"/>
    <property type="match status" value="1"/>
</dbReference>
<dbReference type="Pfam" id="PF00651">
    <property type="entry name" value="BTB"/>
    <property type="match status" value="1"/>
</dbReference>
<dbReference type="Pfam" id="PF03000">
    <property type="entry name" value="NPH3"/>
    <property type="match status" value="1"/>
</dbReference>
<dbReference type="SUPFAM" id="SSF54695">
    <property type="entry name" value="POZ domain"/>
    <property type="match status" value="1"/>
</dbReference>
<dbReference type="PROSITE" id="PS50097">
    <property type="entry name" value="BTB"/>
    <property type="match status" value="1"/>
</dbReference>
<dbReference type="PROSITE" id="PS51649">
    <property type="entry name" value="NPH3"/>
    <property type="match status" value="1"/>
</dbReference>
<protein>
    <recommendedName>
        <fullName>BTB/POZ domain-containing protein DOT3</fullName>
    </recommendedName>
    <alternativeName>
        <fullName evidence="9">Protein DEFECTIVELY ORGANIZED TRIBUTARIES 3</fullName>
    </alternativeName>
</protein>
<organism>
    <name type="scientific">Arabidopsis thaliana</name>
    <name type="common">Mouse-ear cress</name>
    <dbReference type="NCBI Taxonomy" id="3702"/>
    <lineage>
        <taxon>Eukaryota</taxon>
        <taxon>Viridiplantae</taxon>
        <taxon>Streptophyta</taxon>
        <taxon>Embryophyta</taxon>
        <taxon>Tracheophyta</taxon>
        <taxon>Spermatophyta</taxon>
        <taxon>Magnoliopsida</taxon>
        <taxon>eudicotyledons</taxon>
        <taxon>Gunneridae</taxon>
        <taxon>Pentapetalae</taxon>
        <taxon>rosids</taxon>
        <taxon>malvids</taxon>
        <taxon>Brassicales</taxon>
        <taxon>Brassicaceae</taxon>
        <taxon>Camelineae</taxon>
        <taxon>Arabidopsis</taxon>
    </lineage>
</organism>
<feature type="chain" id="PRO_0000409562" description="BTB/POZ domain-containing protein DOT3">
    <location>
        <begin position="1"/>
        <end position="607"/>
    </location>
</feature>
<feature type="domain" description="BTB" evidence="4">
    <location>
        <begin position="52"/>
        <end position="121"/>
    </location>
</feature>
<feature type="domain" description="NPH3" evidence="5">
    <location>
        <begin position="211"/>
        <end position="487"/>
    </location>
</feature>
<feature type="region of interest" description="Disordered" evidence="6">
    <location>
        <begin position="498"/>
        <end position="520"/>
    </location>
</feature>
<feature type="region of interest" description="Disordered" evidence="6">
    <location>
        <begin position="573"/>
        <end position="607"/>
    </location>
</feature>
<feature type="coiled-coil region" evidence="3">
    <location>
        <begin position="511"/>
        <end position="563"/>
    </location>
</feature>
<feature type="compositionally biased region" description="Basic and acidic residues" evidence="6">
    <location>
        <begin position="499"/>
        <end position="520"/>
    </location>
</feature>
<feature type="compositionally biased region" description="Basic and acidic residues" evidence="6">
    <location>
        <begin position="577"/>
        <end position="586"/>
    </location>
</feature>
<feature type="modified residue" description="Phosphotyrosine" evidence="2">
    <location>
        <position position="428"/>
    </location>
</feature>
<name>DOT3_ARATH</name>
<evidence type="ECO:0000250" key="1"/>
<evidence type="ECO:0000250" key="2">
    <source>
        <dbReference type="UniProtKB" id="Q9FMF5"/>
    </source>
</evidence>
<evidence type="ECO:0000255" key="3"/>
<evidence type="ECO:0000255" key="4">
    <source>
        <dbReference type="PROSITE-ProRule" id="PRU00037"/>
    </source>
</evidence>
<evidence type="ECO:0000255" key="5">
    <source>
        <dbReference type="PROSITE-ProRule" id="PRU00982"/>
    </source>
</evidence>
<evidence type="ECO:0000256" key="6">
    <source>
        <dbReference type="SAM" id="MobiDB-lite"/>
    </source>
</evidence>
<evidence type="ECO:0000269" key="7">
    <source>
    </source>
</evidence>
<evidence type="ECO:0000269" key="8">
    <source>
    </source>
</evidence>
<evidence type="ECO:0000303" key="9">
    <source>
    </source>
</evidence>
<keyword id="KW-0175">Coiled coil</keyword>
<keyword id="KW-0597">Phosphoprotein</keyword>
<keyword id="KW-1185">Reference proteome</keyword>
<keyword id="KW-0833">Ubl conjugation pathway</keyword>